<accession>A1CQP0</accession>
<name>DRE2_ASPCL</name>
<feature type="chain" id="PRO_0000392377" description="Fe-S cluster assembly protein dre2">
    <location>
        <begin position="1"/>
        <end position="310"/>
    </location>
</feature>
<feature type="region of interest" description="N-terminal SAM-like domain" evidence="1">
    <location>
        <begin position="1"/>
        <end position="130"/>
    </location>
</feature>
<feature type="region of interest" description="Linker" evidence="1">
    <location>
        <begin position="131"/>
        <end position="203"/>
    </location>
</feature>
<feature type="region of interest" description="Fe-S binding site A" evidence="1">
    <location>
        <begin position="212"/>
        <end position="228"/>
    </location>
</feature>
<feature type="region of interest" description="Fe-S binding site B" evidence="1">
    <location>
        <begin position="273"/>
        <end position="287"/>
    </location>
</feature>
<feature type="short sequence motif" description="Cx2C motif 1" evidence="1">
    <location>
        <begin position="273"/>
        <end position="276"/>
    </location>
</feature>
<feature type="short sequence motif" description="Cx2C motif 2" evidence="1">
    <location>
        <begin position="284"/>
        <end position="287"/>
    </location>
</feature>
<feature type="binding site" evidence="1">
    <location>
        <position position="212"/>
    </location>
    <ligand>
        <name>[2Fe-2S] cluster</name>
        <dbReference type="ChEBI" id="CHEBI:190135"/>
    </ligand>
</feature>
<feature type="binding site" evidence="1">
    <location>
        <position position="223"/>
    </location>
    <ligand>
        <name>[2Fe-2S] cluster</name>
        <dbReference type="ChEBI" id="CHEBI:190135"/>
    </ligand>
</feature>
<feature type="binding site" evidence="1">
    <location>
        <position position="226"/>
    </location>
    <ligand>
        <name>[2Fe-2S] cluster</name>
        <dbReference type="ChEBI" id="CHEBI:190135"/>
    </ligand>
</feature>
<feature type="binding site" evidence="1">
    <location>
        <position position="228"/>
    </location>
    <ligand>
        <name>[2Fe-2S] cluster</name>
        <dbReference type="ChEBI" id="CHEBI:190135"/>
    </ligand>
</feature>
<feature type="binding site" evidence="1">
    <location>
        <position position="273"/>
    </location>
    <ligand>
        <name>[4Fe-4S] cluster</name>
        <dbReference type="ChEBI" id="CHEBI:49883"/>
    </ligand>
</feature>
<feature type="binding site" evidence="1">
    <location>
        <position position="276"/>
    </location>
    <ligand>
        <name>[4Fe-4S] cluster</name>
        <dbReference type="ChEBI" id="CHEBI:49883"/>
    </ligand>
</feature>
<feature type="binding site" evidence="1">
    <location>
        <position position="284"/>
    </location>
    <ligand>
        <name>[4Fe-4S] cluster</name>
        <dbReference type="ChEBI" id="CHEBI:49883"/>
    </ligand>
</feature>
<feature type="binding site" evidence="1">
    <location>
        <position position="287"/>
    </location>
    <ligand>
        <name>[4Fe-4S] cluster</name>
        <dbReference type="ChEBI" id="CHEBI:49883"/>
    </ligand>
</feature>
<organism>
    <name type="scientific">Aspergillus clavatus (strain ATCC 1007 / CBS 513.65 / DSM 816 / NCTC 3887 / NRRL 1 / QM 1276 / 107)</name>
    <dbReference type="NCBI Taxonomy" id="344612"/>
    <lineage>
        <taxon>Eukaryota</taxon>
        <taxon>Fungi</taxon>
        <taxon>Dikarya</taxon>
        <taxon>Ascomycota</taxon>
        <taxon>Pezizomycotina</taxon>
        <taxon>Eurotiomycetes</taxon>
        <taxon>Eurotiomycetidae</taxon>
        <taxon>Eurotiales</taxon>
        <taxon>Aspergillaceae</taxon>
        <taxon>Aspergillus</taxon>
        <taxon>Aspergillus subgen. Fumigati</taxon>
    </lineage>
</organism>
<evidence type="ECO:0000255" key="1">
    <source>
        <dbReference type="HAMAP-Rule" id="MF_03115"/>
    </source>
</evidence>
<evidence type="ECO:0000305" key="2"/>
<proteinExistence type="inferred from homology"/>
<gene>
    <name evidence="1" type="primary">dre2</name>
    <name type="ORF">ACLA_026830</name>
</gene>
<dbReference type="EMBL" id="DS027059">
    <property type="protein sequence ID" value="EAW07961.1"/>
    <property type="status" value="ALT_SEQ"/>
    <property type="molecule type" value="Genomic_DNA"/>
</dbReference>
<dbReference type="RefSeq" id="XP_001269387.1">
    <property type="nucleotide sequence ID" value="XM_001269386.1"/>
</dbReference>
<dbReference type="SMR" id="A1CQP0"/>
<dbReference type="STRING" id="344612.A1CQP0"/>
<dbReference type="EnsemblFungi" id="EAW07961">
    <property type="protein sequence ID" value="EAW07961"/>
    <property type="gene ID" value="ACLA_026830"/>
</dbReference>
<dbReference type="GeneID" id="4701480"/>
<dbReference type="KEGG" id="act:ACLA_026830"/>
<dbReference type="eggNOG" id="KOG4020">
    <property type="taxonomic scope" value="Eukaryota"/>
</dbReference>
<dbReference type="OrthoDB" id="311633at2759"/>
<dbReference type="Proteomes" id="UP000006701">
    <property type="component" value="Unassembled WGS sequence"/>
</dbReference>
<dbReference type="GO" id="GO:0005758">
    <property type="term" value="C:mitochondrial intermembrane space"/>
    <property type="evidence" value="ECO:0007669"/>
    <property type="project" value="UniProtKB-SubCell"/>
</dbReference>
<dbReference type="GO" id="GO:0051537">
    <property type="term" value="F:2 iron, 2 sulfur cluster binding"/>
    <property type="evidence" value="ECO:0007669"/>
    <property type="project" value="UniProtKB-UniRule"/>
</dbReference>
<dbReference type="GO" id="GO:0051539">
    <property type="term" value="F:4 iron, 4 sulfur cluster binding"/>
    <property type="evidence" value="ECO:0007669"/>
    <property type="project" value="UniProtKB-KW"/>
</dbReference>
<dbReference type="GO" id="GO:0009055">
    <property type="term" value="F:electron transfer activity"/>
    <property type="evidence" value="ECO:0007669"/>
    <property type="project" value="UniProtKB-UniRule"/>
</dbReference>
<dbReference type="GO" id="GO:0046872">
    <property type="term" value="F:metal ion binding"/>
    <property type="evidence" value="ECO:0007669"/>
    <property type="project" value="UniProtKB-KW"/>
</dbReference>
<dbReference type="GO" id="GO:0016226">
    <property type="term" value="P:iron-sulfur cluster assembly"/>
    <property type="evidence" value="ECO:0007669"/>
    <property type="project" value="UniProtKB-UniRule"/>
</dbReference>
<dbReference type="Gene3D" id="3.40.50.11000">
    <property type="entry name" value="Fe-S cluster assembly protein Dre2, N-terminal domain"/>
    <property type="match status" value="1"/>
</dbReference>
<dbReference type="HAMAP" id="MF_03115">
    <property type="entry name" value="Anamorsin"/>
    <property type="match status" value="1"/>
</dbReference>
<dbReference type="InterPro" id="IPR007785">
    <property type="entry name" value="Anamorsin"/>
</dbReference>
<dbReference type="InterPro" id="IPR046408">
    <property type="entry name" value="CIAPIN1"/>
</dbReference>
<dbReference type="InterPro" id="IPR031838">
    <property type="entry name" value="Dre2_N"/>
</dbReference>
<dbReference type="PANTHER" id="PTHR13273">
    <property type="entry name" value="ANAMORSIN"/>
    <property type="match status" value="1"/>
</dbReference>
<dbReference type="PANTHER" id="PTHR13273:SF14">
    <property type="entry name" value="ANAMORSIN"/>
    <property type="match status" value="1"/>
</dbReference>
<dbReference type="Pfam" id="PF05093">
    <property type="entry name" value="CIAPIN1"/>
    <property type="match status" value="1"/>
</dbReference>
<dbReference type="Pfam" id="PF16803">
    <property type="entry name" value="DRE2_N"/>
    <property type="match status" value="1"/>
</dbReference>
<keyword id="KW-0001">2Fe-2S</keyword>
<keyword id="KW-0004">4Fe-4S</keyword>
<keyword id="KW-0963">Cytoplasm</keyword>
<keyword id="KW-0408">Iron</keyword>
<keyword id="KW-0411">Iron-sulfur</keyword>
<keyword id="KW-0479">Metal-binding</keyword>
<keyword id="KW-0496">Mitochondrion</keyword>
<keyword id="KW-1185">Reference proteome</keyword>
<protein>
    <recommendedName>
        <fullName evidence="1">Fe-S cluster assembly protein dre2</fullName>
    </recommendedName>
    <alternativeName>
        <fullName evidence="1">Anamorsin homolog</fullName>
    </alternativeName>
</protein>
<reference key="1">
    <citation type="journal article" date="2008" name="PLoS Genet.">
        <title>Genomic islands in the pathogenic filamentous fungus Aspergillus fumigatus.</title>
        <authorList>
            <person name="Fedorova N.D."/>
            <person name="Khaldi N."/>
            <person name="Joardar V.S."/>
            <person name="Maiti R."/>
            <person name="Amedeo P."/>
            <person name="Anderson M.J."/>
            <person name="Crabtree J."/>
            <person name="Silva J.C."/>
            <person name="Badger J.H."/>
            <person name="Albarraq A."/>
            <person name="Angiuoli S."/>
            <person name="Bussey H."/>
            <person name="Bowyer P."/>
            <person name="Cotty P.J."/>
            <person name="Dyer P.S."/>
            <person name="Egan A."/>
            <person name="Galens K."/>
            <person name="Fraser-Liggett C.M."/>
            <person name="Haas B.J."/>
            <person name="Inman J.M."/>
            <person name="Kent R."/>
            <person name="Lemieux S."/>
            <person name="Malavazi I."/>
            <person name="Orvis J."/>
            <person name="Roemer T."/>
            <person name="Ronning C.M."/>
            <person name="Sundaram J.P."/>
            <person name="Sutton G."/>
            <person name="Turner G."/>
            <person name="Venter J.C."/>
            <person name="White O.R."/>
            <person name="Whitty B.R."/>
            <person name="Youngman P."/>
            <person name="Wolfe K.H."/>
            <person name="Goldman G.H."/>
            <person name="Wortman J.R."/>
            <person name="Jiang B."/>
            <person name="Denning D.W."/>
            <person name="Nierman W.C."/>
        </authorList>
    </citation>
    <scope>NUCLEOTIDE SEQUENCE [LARGE SCALE GENOMIC DNA]</scope>
    <source>
        <strain>ATCC 1007 / CBS 513.65 / DSM 816 / NCTC 3887 / NRRL 1 / QM 1276 / 107</strain>
    </source>
</reference>
<comment type="function">
    <text evidence="1">Component of the cytosolic iron-sulfur (Fe-S) protein assembly (CIA) machinery required for the maturation of extramitochondrial Fe-S proteins. Part of an electron transfer chain functioning in an early step of cytosolic Fe-S biogenesis, facilitating the de novo assembly of a [4Fe-4S] cluster on the scaffold complex cfd1-nbp35. Electrons are transferred to dre2 from NADPH via the FAD- and FMN-containing protein tah18. Tah18-dre2 are also required for the assembly of the diferric tyrosyl radical cofactor of ribonucleotide reductase (RNR), probably by providing electrons for reduction during radical cofactor maturation in the catalytic small subunit rnr2.</text>
</comment>
<comment type="cofactor">
    <cofactor evidence="1">
        <name>[2Fe-2S] cluster</name>
        <dbReference type="ChEBI" id="CHEBI:190135"/>
    </cofactor>
</comment>
<comment type="cofactor">
    <cofactor evidence="1">
        <name>[4Fe-4S] cluster</name>
        <dbReference type="ChEBI" id="CHEBI:49883"/>
    </cofactor>
</comment>
<comment type="subunit">
    <text evidence="1">Monomer. Interacts with tah18. Interacts with mia40.</text>
</comment>
<comment type="subcellular location">
    <subcellularLocation>
        <location evidence="1">Cytoplasm</location>
    </subcellularLocation>
    <subcellularLocation>
        <location evidence="1">Mitochondrion intermembrane space</location>
    </subcellularLocation>
</comment>
<comment type="domain">
    <text evidence="1">The C-terminal domain binds 2 Fe-S clusters but is otherwise mostly in an intrinsically disordered conformation.</text>
</comment>
<comment type="domain">
    <text evidence="1">The N-terminal domain has structural similarity with S-adenosyl-L-methionine-dependent methyltransferases, but does not bind S-adenosyl-L-methionine. It is required for correct assembly of the 2 Fe-S clusters.</text>
</comment>
<comment type="domain">
    <text evidence="1">The twin Cx2C motifs are involved in the recognition by the mitochondrial mia40-erv1 disulfide relay system. The formation of 2 disulfide bonds in the Cx2C motifs through dithiol/disulfide exchange reactions effectively traps the protein in the mitochondrial intermembrane space.</text>
</comment>
<comment type="similarity">
    <text evidence="1">Belongs to the anamorsin family.</text>
</comment>
<comment type="sequence caution" evidence="2">
    <conflict type="erroneous gene model prediction">
        <sequence resource="EMBL-CDS" id="EAW07961"/>
    </conflict>
</comment>
<sequence length="310" mass="33963">MSGRTLLLSPPSLSSQPERLNGILQSYDRKTTDLQMLDRLILGVVNLPDAAYSRIIILAGEEDSISESSKLTTRETFSHIARSLQKGGYICSQHEQQGQAFDHNEAVLVGLIPTDNGKFVKPDIEDMRAVPLRLGRKKHDKTISSNLAEPVRNHQASPTVAQDQAEDGFRYSSGRNIVTASAHETSDNEIIDEEDLLDGSELAAPIIQPPECRPKAGRRRRACKDCTCGLAQKLEEEDAMRRHAADKQLGAMKLSHGDLAEVDFTVQGKVGSCGNCSLGDAFRCEGCPFIGLPAFQPGEEIRLLNDDIQL</sequence>